<proteinExistence type="inferred from homology"/>
<organism>
    <name type="scientific">Rubrivivax gelatinosus (strain NBRC 100245 / IL144)</name>
    <dbReference type="NCBI Taxonomy" id="983917"/>
    <lineage>
        <taxon>Bacteria</taxon>
        <taxon>Pseudomonadati</taxon>
        <taxon>Pseudomonadota</taxon>
        <taxon>Betaproteobacteria</taxon>
        <taxon>Burkholderiales</taxon>
        <taxon>Sphaerotilaceae</taxon>
        <taxon>Rubrivivax</taxon>
    </lineage>
</organism>
<reference key="1">
    <citation type="journal article" date="2001" name="J. Mol. Evol.">
        <title>Horizontal transfer of the photosynthesis gene cluster and operon rearrangement in purple bacteria.</title>
        <authorList>
            <person name="Igarashi N."/>
            <person name="Harada J."/>
            <person name="Nagashima S."/>
            <person name="Matsuura K."/>
            <person name="Shimada K."/>
            <person name="Nagashima K.V.P."/>
        </authorList>
    </citation>
    <scope>NUCLEOTIDE SEQUENCE [GENOMIC DNA]</scope>
    <source>
        <strain>NBRC 100245 / IL144</strain>
    </source>
</reference>
<reference key="2">
    <citation type="journal article" date="2012" name="J. Bacteriol.">
        <title>Complete genome sequence of phototrophic betaproteobacterium Rubrivivax gelatinosus IL144.</title>
        <authorList>
            <person name="Nagashima S."/>
            <person name="Kamimura A."/>
            <person name="Shimizu T."/>
            <person name="Nakamura-Isaki S."/>
            <person name="Aono E."/>
            <person name="Sakamoto K."/>
            <person name="Ichikawa N."/>
            <person name="Nakazawa H."/>
            <person name="Sekine M."/>
            <person name="Yamazaki S."/>
            <person name="Fujita N."/>
            <person name="Shimada K."/>
            <person name="Hanada S."/>
            <person name="Nagashima K.V."/>
        </authorList>
    </citation>
    <scope>NUCLEOTIDE SEQUENCE [LARGE SCALE GENOMIC DNA]</scope>
    <source>
        <strain>NBRC 100245 / IL144</strain>
    </source>
</reference>
<feature type="chain" id="PRO_0000111838" description="5'-nucleotidase SurE">
    <location>
        <begin position="1"/>
        <end position="255"/>
    </location>
</feature>
<feature type="binding site" evidence="1">
    <location>
        <position position="8"/>
    </location>
    <ligand>
        <name>a divalent metal cation</name>
        <dbReference type="ChEBI" id="CHEBI:60240"/>
    </ligand>
</feature>
<feature type="binding site" evidence="1">
    <location>
        <position position="9"/>
    </location>
    <ligand>
        <name>a divalent metal cation</name>
        <dbReference type="ChEBI" id="CHEBI:60240"/>
    </ligand>
</feature>
<feature type="binding site" evidence="1">
    <location>
        <position position="39"/>
    </location>
    <ligand>
        <name>a divalent metal cation</name>
        <dbReference type="ChEBI" id="CHEBI:60240"/>
    </ligand>
</feature>
<feature type="binding site" evidence="1">
    <location>
        <position position="95"/>
    </location>
    <ligand>
        <name>a divalent metal cation</name>
        <dbReference type="ChEBI" id="CHEBI:60240"/>
    </ligand>
</feature>
<dbReference type="EC" id="3.1.3.5" evidence="1"/>
<dbReference type="EMBL" id="AB034704">
    <property type="protein sequence ID" value="BAA94069.1"/>
    <property type="molecule type" value="Genomic_DNA"/>
</dbReference>
<dbReference type="EMBL" id="AP012320">
    <property type="protein sequence ID" value="BAL96675.1"/>
    <property type="molecule type" value="Genomic_DNA"/>
</dbReference>
<dbReference type="PIR" id="T50916">
    <property type="entry name" value="T50916"/>
</dbReference>
<dbReference type="RefSeq" id="WP_014429536.1">
    <property type="nucleotide sequence ID" value="NC_017075.1"/>
</dbReference>
<dbReference type="SMR" id="Q9JP92"/>
<dbReference type="STRING" id="983917.RGE_33360"/>
<dbReference type="KEGG" id="rge:RGE_33360"/>
<dbReference type="PATRIC" id="fig|983917.3.peg.3259"/>
<dbReference type="eggNOG" id="COG0496">
    <property type="taxonomic scope" value="Bacteria"/>
</dbReference>
<dbReference type="HOGENOM" id="CLU_045192_1_2_4"/>
<dbReference type="Proteomes" id="UP000007883">
    <property type="component" value="Chromosome"/>
</dbReference>
<dbReference type="GO" id="GO:0005737">
    <property type="term" value="C:cytoplasm"/>
    <property type="evidence" value="ECO:0007669"/>
    <property type="project" value="UniProtKB-SubCell"/>
</dbReference>
<dbReference type="GO" id="GO:0008254">
    <property type="term" value="F:3'-nucleotidase activity"/>
    <property type="evidence" value="ECO:0007669"/>
    <property type="project" value="TreeGrafter"/>
</dbReference>
<dbReference type="GO" id="GO:0008253">
    <property type="term" value="F:5'-nucleotidase activity"/>
    <property type="evidence" value="ECO:0007669"/>
    <property type="project" value="UniProtKB-UniRule"/>
</dbReference>
<dbReference type="GO" id="GO:0004309">
    <property type="term" value="F:exopolyphosphatase activity"/>
    <property type="evidence" value="ECO:0007669"/>
    <property type="project" value="TreeGrafter"/>
</dbReference>
<dbReference type="GO" id="GO:0046872">
    <property type="term" value="F:metal ion binding"/>
    <property type="evidence" value="ECO:0007669"/>
    <property type="project" value="UniProtKB-UniRule"/>
</dbReference>
<dbReference type="GO" id="GO:0000166">
    <property type="term" value="F:nucleotide binding"/>
    <property type="evidence" value="ECO:0007669"/>
    <property type="project" value="UniProtKB-KW"/>
</dbReference>
<dbReference type="FunFam" id="3.40.1210.10:FF:000001">
    <property type="entry name" value="5'/3'-nucleotidase SurE"/>
    <property type="match status" value="1"/>
</dbReference>
<dbReference type="Gene3D" id="3.40.1210.10">
    <property type="entry name" value="Survival protein SurE-like phosphatase/nucleotidase"/>
    <property type="match status" value="1"/>
</dbReference>
<dbReference type="HAMAP" id="MF_00060">
    <property type="entry name" value="SurE"/>
    <property type="match status" value="1"/>
</dbReference>
<dbReference type="InterPro" id="IPR030048">
    <property type="entry name" value="SurE"/>
</dbReference>
<dbReference type="InterPro" id="IPR002828">
    <property type="entry name" value="SurE-like_Pase/nucleotidase"/>
</dbReference>
<dbReference type="InterPro" id="IPR036523">
    <property type="entry name" value="SurE-like_sf"/>
</dbReference>
<dbReference type="NCBIfam" id="NF001489">
    <property type="entry name" value="PRK00346.1-3"/>
    <property type="match status" value="1"/>
</dbReference>
<dbReference type="NCBIfam" id="NF001490">
    <property type="entry name" value="PRK00346.1-4"/>
    <property type="match status" value="1"/>
</dbReference>
<dbReference type="NCBIfam" id="TIGR00087">
    <property type="entry name" value="surE"/>
    <property type="match status" value="1"/>
</dbReference>
<dbReference type="PANTHER" id="PTHR30457">
    <property type="entry name" value="5'-NUCLEOTIDASE SURE"/>
    <property type="match status" value="1"/>
</dbReference>
<dbReference type="PANTHER" id="PTHR30457:SF12">
    <property type="entry name" value="5'_3'-NUCLEOTIDASE SURE"/>
    <property type="match status" value="1"/>
</dbReference>
<dbReference type="Pfam" id="PF01975">
    <property type="entry name" value="SurE"/>
    <property type="match status" value="1"/>
</dbReference>
<dbReference type="SUPFAM" id="SSF64167">
    <property type="entry name" value="SurE-like"/>
    <property type="match status" value="1"/>
</dbReference>
<comment type="function">
    <text evidence="1">Nucleotidase that shows phosphatase activity on nucleoside 5'-monophosphates.</text>
</comment>
<comment type="catalytic activity">
    <reaction evidence="1">
        <text>a ribonucleoside 5'-phosphate + H2O = a ribonucleoside + phosphate</text>
        <dbReference type="Rhea" id="RHEA:12484"/>
        <dbReference type="ChEBI" id="CHEBI:15377"/>
        <dbReference type="ChEBI" id="CHEBI:18254"/>
        <dbReference type="ChEBI" id="CHEBI:43474"/>
        <dbReference type="ChEBI" id="CHEBI:58043"/>
        <dbReference type="EC" id="3.1.3.5"/>
    </reaction>
</comment>
<comment type="cofactor">
    <cofactor evidence="1">
        <name>a divalent metal cation</name>
        <dbReference type="ChEBI" id="CHEBI:60240"/>
    </cofactor>
    <text evidence="1">Binds 1 divalent metal cation per subunit.</text>
</comment>
<comment type="subcellular location">
    <subcellularLocation>
        <location evidence="1">Cytoplasm</location>
    </subcellularLocation>
</comment>
<comment type="similarity">
    <text evidence="1">Belongs to the SurE nucleotidase family.</text>
</comment>
<protein>
    <recommendedName>
        <fullName evidence="1">5'-nucleotidase SurE</fullName>
        <ecNumber evidence="1">3.1.3.5</ecNumber>
    </recommendedName>
    <alternativeName>
        <fullName evidence="1">Nucleoside 5'-monophosphate phosphohydrolase</fullName>
    </alternativeName>
</protein>
<gene>
    <name evidence="1" type="primary">surE</name>
    <name type="ordered locus">RGE_33360</name>
</gene>
<name>SURE_RUBGI</name>
<sequence length="255" mass="26509">MRILIANDDGYLAPGIAALVKACEGLGTIDVIAPEQNASGTSNALTLNRPLSVFEARGEPVQGFRVVNGTPSDSVHVALTGLLPHKPDLVLSGINQGANMGDDTLYSGTVAAAMEGYLFGVPAIAFSQAEKGWTHLDAAAATARAIVEQVLAGGPPTGPWLLNVNIPNRADAASLPRLVTRLGRRHASEPVIRQTNPRGEPIYWIGPAGDARDAGEGTDFHAVAHGAVSITPLQVDLTDHAMRGAWASRLGVPLA</sequence>
<evidence type="ECO:0000255" key="1">
    <source>
        <dbReference type="HAMAP-Rule" id="MF_00060"/>
    </source>
</evidence>
<keyword id="KW-0963">Cytoplasm</keyword>
<keyword id="KW-0378">Hydrolase</keyword>
<keyword id="KW-0479">Metal-binding</keyword>
<keyword id="KW-0547">Nucleotide-binding</keyword>
<keyword id="KW-1185">Reference proteome</keyword>
<accession>Q9JP92</accession>
<accession>I0HUI8</accession>